<sequence>MSYTMEPLGNPSYRRVMTETRATYSRASASPSSGFRSQSWSRGSGSTVSSSYKRTNLGAPRTAYGSTVLSSAESLDVSQSSLLNGAAELKLSRSNEKEQLQGLNDRFAGYIEKVHYLEQQNKEIEAELAALRQKHAGRAQLGDAYEQELRELRGALEQVSHEKAQIQLDSEHIEEDIQRLRERFEDEARLRDETEATIAALRKEMEEASLMRAELDKKVQSLQDEVAFLRGNHEEEVAELLAQLQASHATVERKDYLKTDLTTALKEIRAQLECQSDHNMHQAEEWFKCRYAKLTEAAEQNKEAIRSAKEEIAEYRRQLQSKSIELESVRGTKESLERQLSDIEERHNNDLTTYQDTIHQLENELRGTKWEMARHLREYQDLLNVKMALDIEIAAYRKLLEGEETRFSAFSGSITGPIFTHRQPSVTIASTKIQKTKIEPPKLKVQHKFVEEIIEETKVEDEKSEMEDALSAIAEEMAAKAQEEEQEEEKAEEEAVEEEAVSEKAAEQAAEEEEKEEEEAEEEEAAKSDAAEEGGSKKEEIEEKEEGEEAEEEEAEAKGKAEEAGAKVEKVKSPPAKSPPKSPPKSPVTEQAKAVQKAAAEVGKDQKAEKAAEKAAKEEKAASPEKPATPKVTSPEKPATPEKPPTPEKAITPEKVRSPEKPTTPEKVVSPEKPASPEKPRTPEKPASPEKPATPEKPRTPEKPATPEKPRSPEKPSSPLKDEKAVVEESITVTKVTKVTAEVEVSKEARKEDIAVNGEVEEKKDEAKEKEAEEEEKGVVTNGLDVSPVDEKGEKVVVTKKAEKITSEGGDSTTTYITKSVTVTQKVEEHEESFEEKLVSTKKVEKVTSHAVVKEIKE</sequence>
<proteinExistence type="evidence at transcript level"/>
<evidence type="ECO:0000250" key="1"/>
<evidence type="ECO:0000250" key="2">
    <source>
        <dbReference type="UniProtKB" id="P08553"/>
    </source>
</evidence>
<evidence type="ECO:0000255" key="3">
    <source>
        <dbReference type="PROSITE-ProRule" id="PRU01188"/>
    </source>
</evidence>
<evidence type="ECO:0000256" key="4">
    <source>
        <dbReference type="SAM" id="MobiDB-lite"/>
    </source>
</evidence>
<evidence type="ECO:0000305" key="5"/>
<protein>
    <recommendedName>
        <fullName>Neurofilament medium polypeptide</fullName>
        <shortName>NF-M</shortName>
    </recommendedName>
    <alternativeName>
        <fullName>160 kDa neurofilament protein</fullName>
    </alternativeName>
    <alternativeName>
        <fullName>Neurofilament triplet M protein</fullName>
    </alternativeName>
</protein>
<dbReference type="EMBL" id="X17102">
    <property type="protein sequence ID" value="CAA34958.1"/>
    <property type="molecule type" value="Genomic_DNA"/>
</dbReference>
<dbReference type="EMBL" id="X05558">
    <property type="protein sequence ID" value="CAA29073.1"/>
    <property type="molecule type" value="mRNA"/>
</dbReference>
<dbReference type="PIR" id="S15762">
    <property type="entry name" value="S15762"/>
</dbReference>
<dbReference type="RefSeq" id="NP_001095200.1">
    <property type="nucleotide sequence ID" value="NM_001101730.1"/>
</dbReference>
<dbReference type="SMR" id="P16053"/>
<dbReference type="BioGRID" id="676466">
    <property type="interactions" value="1"/>
</dbReference>
<dbReference type="FunCoup" id="P16053">
    <property type="interactions" value="86"/>
</dbReference>
<dbReference type="IntAct" id="P16053">
    <property type="interactions" value="1"/>
</dbReference>
<dbReference type="STRING" id="9031.ENSGALP00000000422"/>
<dbReference type="GlyCosmos" id="P16053">
    <property type="glycosylation" value="2 sites, No reported glycans"/>
</dbReference>
<dbReference type="GlyGen" id="P16053">
    <property type="glycosylation" value="2 sites"/>
</dbReference>
<dbReference type="iPTMnet" id="P16053"/>
<dbReference type="PaxDb" id="9031-ENSGALP00000000422"/>
<dbReference type="GeneID" id="396206"/>
<dbReference type="KEGG" id="gga:396206"/>
<dbReference type="CTD" id="4741"/>
<dbReference type="VEuPathDB" id="HostDB:geneid_396206"/>
<dbReference type="eggNOG" id="KOG1216">
    <property type="taxonomic scope" value="Eukaryota"/>
</dbReference>
<dbReference type="InParanoid" id="P16053"/>
<dbReference type="OrthoDB" id="2441647at2759"/>
<dbReference type="PhylomeDB" id="P16053"/>
<dbReference type="PRO" id="PR:P16053"/>
<dbReference type="Proteomes" id="UP000000539">
    <property type="component" value="Unassembled WGS sequence"/>
</dbReference>
<dbReference type="GO" id="GO:0030424">
    <property type="term" value="C:axon"/>
    <property type="evidence" value="ECO:0000318"/>
    <property type="project" value="GO_Central"/>
</dbReference>
<dbReference type="GO" id="GO:0005737">
    <property type="term" value="C:cytoplasm"/>
    <property type="evidence" value="ECO:0007669"/>
    <property type="project" value="UniProtKB-KW"/>
</dbReference>
<dbReference type="GO" id="GO:0005882">
    <property type="term" value="C:intermediate filament"/>
    <property type="evidence" value="ECO:0000318"/>
    <property type="project" value="GO_Central"/>
</dbReference>
<dbReference type="GO" id="GO:0099160">
    <property type="term" value="C:postsynaptic intermediate filament cytoskeleton"/>
    <property type="evidence" value="ECO:0000318"/>
    <property type="project" value="GO_Central"/>
</dbReference>
<dbReference type="GO" id="GO:0005200">
    <property type="term" value="F:structural constituent of cytoskeleton"/>
    <property type="evidence" value="ECO:0000318"/>
    <property type="project" value="GO_Central"/>
</dbReference>
<dbReference type="GO" id="GO:0033693">
    <property type="term" value="P:neurofilament bundle assembly"/>
    <property type="evidence" value="ECO:0000318"/>
    <property type="project" value="GO_Central"/>
</dbReference>
<dbReference type="FunFam" id="1.20.5.1160:FF:000001">
    <property type="entry name" value="Keratin type II"/>
    <property type="match status" value="1"/>
</dbReference>
<dbReference type="FunFam" id="1.20.5.170:FF:000002">
    <property type="entry name" value="Type I keratin KA11"/>
    <property type="match status" value="1"/>
</dbReference>
<dbReference type="FunFam" id="1.20.5.500:FF:000001">
    <property type="entry name" value="Type II keratin 23"/>
    <property type="match status" value="1"/>
</dbReference>
<dbReference type="Gene3D" id="1.20.5.170">
    <property type="match status" value="1"/>
</dbReference>
<dbReference type="Gene3D" id="1.20.5.500">
    <property type="entry name" value="Single helix bin"/>
    <property type="match status" value="1"/>
</dbReference>
<dbReference type="Gene3D" id="1.20.5.1160">
    <property type="entry name" value="Vasodilator-stimulated phosphoprotein"/>
    <property type="match status" value="1"/>
</dbReference>
<dbReference type="InterPro" id="IPR018039">
    <property type="entry name" value="IF_conserved"/>
</dbReference>
<dbReference type="InterPro" id="IPR039008">
    <property type="entry name" value="IF_rod_dom"/>
</dbReference>
<dbReference type="InterPro" id="IPR006821">
    <property type="entry name" value="Intermed_filament_DNA-bd"/>
</dbReference>
<dbReference type="InterPro" id="IPR002957">
    <property type="entry name" value="Keratin_I"/>
</dbReference>
<dbReference type="PANTHER" id="PTHR23214:SF1">
    <property type="entry name" value="NEUROFILAMENT HEAVY POLYPEPTIDE"/>
    <property type="match status" value="1"/>
</dbReference>
<dbReference type="PANTHER" id="PTHR23214">
    <property type="entry name" value="NEUROFILAMENT TRIPLET H PROTEIN"/>
    <property type="match status" value="1"/>
</dbReference>
<dbReference type="Pfam" id="PF00038">
    <property type="entry name" value="Filament"/>
    <property type="match status" value="1"/>
</dbReference>
<dbReference type="Pfam" id="PF04732">
    <property type="entry name" value="Filament_head"/>
    <property type="match status" value="1"/>
</dbReference>
<dbReference type="PRINTS" id="PR01248">
    <property type="entry name" value="TYPE1KERATIN"/>
</dbReference>
<dbReference type="SMART" id="SM01391">
    <property type="entry name" value="Filament"/>
    <property type="match status" value="1"/>
</dbReference>
<dbReference type="SUPFAM" id="SSF64593">
    <property type="entry name" value="Intermediate filament protein, coiled coil region"/>
    <property type="match status" value="2"/>
</dbReference>
<dbReference type="PROSITE" id="PS00226">
    <property type="entry name" value="IF_ROD_1"/>
    <property type="match status" value="1"/>
</dbReference>
<dbReference type="PROSITE" id="PS51842">
    <property type="entry name" value="IF_ROD_2"/>
    <property type="match status" value="1"/>
</dbReference>
<feature type="initiator methionine" description="Removed">
    <location>
        <position position="1"/>
    </location>
</feature>
<feature type="chain" id="PRO_0000063799" description="Neurofilament medium polypeptide">
    <location>
        <begin position="2"/>
        <end position="858"/>
    </location>
</feature>
<feature type="domain" description="IF rod" evidence="3">
    <location>
        <begin position="96"/>
        <end position="407"/>
    </location>
</feature>
<feature type="region of interest" description="Head">
    <location>
        <begin position="2"/>
        <end position="99"/>
    </location>
</feature>
<feature type="region of interest" description="Disordered" evidence="4">
    <location>
        <begin position="22"/>
        <end position="57"/>
    </location>
</feature>
<feature type="region of interest" description="Coil 1A">
    <location>
        <begin position="100"/>
        <end position="131"/>
    </location>
</feature>
<feature type="region of interest" description="Linker 1">
    <location>
        <begin position="132"/>
        <end position="144"/>
    </location>
</feature>
<feature type="region of interest" description="Coil 1B">
    <location>
        <begin position="145"/>
        <end position="243"/>
    </location>
</feature>
<feature type="region of interest" description="Linker 12">
    <location>
        <begin position="244"/>
        <end position="260"/>
    </location>
</feature>
<feature type="region of interest" description="Coil 2A">
    <location>
        <begin position="261"/>
        <end position="282"/>
    </location>
</feature>
<feature type="region of interest" description="Linker 2">
    <location>
        <begin position="283"/>
        <end position="286"/>
    </location>
</feature>
<feature type="region of interest" description="Coil 2B">
    <location>
        <begin position="287"/>
        <end position="407"/>
    </location>
</feature>
<feature type="region of interest" description="Tail">
    <location>
        <begin position="408"/>
        <end position="858"/>
    </location>
</feature>
<feature type="region of interest" description="Disordered" evidence="4">
    <location>
        <begin position="478"/>
        <end position="788"/>
    </location>
</feature>
<feature type="compositionally biased region" description="Low complexity" evidence="4">
    <location>
        <begin position="30"/>
        <end position="54"/>
    </location>
</feature>
<feature type="compositionally biased region" description="Acidic residues" evidence="4">
    <location>
        <begin position="484"/>
        <end position="500"/>
    </location>
</feature>
<feature type="compositionally biased region" description="Acidic residues" evidence="4">
    <location>
        <begin position="509"/>
        <end position="524"/>
    </location>
</feature>
<feature type="compositionally biased region" description="Basic and acidic residues" evidence="4">
    <location>
        <begin position="525"/>
        <end position="541"/>
    </location>
</feature>
<feature type="compositionally biased region" description="Acidic residues" evidence="4">
    <location>
        <begin position="542"/>
        <end position="555"/>
    </location>
</feature>
<feature type="compositionally biased region" description="Basic and acidic residues" evidence="4">
    <location>
        <begin position="556"/>
        <end position="572"/>
    </location>
</feature>
<feature type="compositionally biased region" description="Pro residues" evidence="4">
    <location>
        <begin position="576"/>
        <end position="586"/>
    </location>
</feature>
<feature type="compositionally biased region" description="Low complexity" evidence="4">
    <location>
        <begin position="590"/>
        <end position="601"/>
    </location>
</feature>
<feature type="compositionally biased region" description="Basic and acidic residues" evidence="4">
    <location>
        <begin position="602"/>
        <end position="623"/>
    </location>
</feature>
<feature type="compositionally biased region" description="Low complexity" evidence="4">
    <location>
        <begin position="624"/>
        <end position="637"/>
    </location>
</feature>
<feature type="compositionally biased region" description="Basic and acidic residues" evidence="4">
    <location>
        <begin position="651"/>
        <end position="664"/>
    </location>
</feature>
<feature type="compositionally biased region" description="Basic and acidic residues" evidence="4">
    <location>
        <begin position="675"/>
        <end position="727"/>
    </location>
</feature>
<feature type="compositionally biased region" description="Low complexity" evidence="4">
    <location>
        <begin position="728"/>
        <end position="743"/>
    </location>
</feature>
<feature type="compositionally biased region" description="Basic and acidic residues" evidence="4">
    <location>
        <begin position="744"/>
        <end position="771"/>
    </location>
</feature>
<feature type="modified residue" description="N-acetylserine" evidence="1">
    <location>
        <position position="2"/>
    </location>
</feature>
<feature type="glycosylation site" description="O-linked (GlcNAc) threonine" evidence="1">
    <location>
        <position position="47"/>
    </location>
</feature>
<feature type="glycosylation site" description="O-linked (GlcNAc) threonine" evidence="1">
    <location>
        <position position="427"/>
    </location>
</feature>
<feature type="sequence conflict" description="In Ref. 2; CAA29073." evidence="5" ref="2">
    <original>G</original>
    <variation>R</variation>
    <location>
        <position position="547"/>
    </location>
</feature>
<gene>
    <name type="primary">NEFM</name>
</gene>
<reference key="1">
    <citation type="journal article" date="1990" name="Nucleic Acids Res.">
        <title>Isolation of the chicken middle-molecular weight neurofilament (NF-M) gene and characterization of its promoter.</title>
        <authorList>
            <person name="Zopf D."/>
            <person name="Dineva B."/>
            <person name="Betz H."/>
            <person name="Gundelfinger E.D."/>
        </authorList>
    </citation>
    <scope>NUCLEOTIDE SEQUENCE [GENOMIC DNA]</scope>
</reference>
<reference key="2">
    <citation type="journal article" date="1987" name="Genes Dev.">
        <title>Identification of gene products expressed in the developing chick visual system: characterization of a middle-molecular-weight neurofilament cDNA.</title>
        <authorList>
            <person name="Zopf D."/>
            <person name="Hermans-Borgmeyer I."/>
            <person name="Gundelfinger E.D."/>
            <person name="Betz H."/>
        </authorList>
    </citation>
    <scope>NUCLEOTIDE SEQUENCE [MRNA] OF 260-858</scope>
</reference>
<accession>P16053</accession>
<keyword id="KW-0007">Acetylation</keyword>
<keyword id="KW-0966">Cell projection</keyword>
<keyword id="KW-0175">Coiled coil</keyword>
<keyword id="KW-0963">Cytoplasm</keyword>
<keyword id="KW-0206">Cytoskeleton</keyword>
<keyword id="KW-0325">Glycoprotein</keyword>
<keyword id="KW-0403">Intermediate filament</keyword>
<keyword id="KW-0597">Phosphoprotein</keyword>
<keyword id="KW-1185">Reference proteome</keyword>
<organism>
    <name type="scientific">Gallus gallus</name>
    <name type="common">Chicken</name>
    <dbReference type="NCBI Taxonomy" id="9031"/>
    <lineage>
        <taxon>Eukaryota</taxon>
        <taxon>Metazoa</taxon>
        <taxon>Chordata</taxon>
        <taxon>Craniata</taxon>
        <taxon>Vertebrata</taxon>
        <taxon>Euteleostomi</taxon>
        <taxon>Archelosauria</taxon>
        <taxon>Archosauria</taxon>
        <taxon>Dinosauria</taxon>
        <taxon>Saurischia</taxon>
        <taxon>Theropoda</taxon>
        <taxon>Coelurosauria</taxon>
        <taxon>Aves</taxon>
        <taxon>Neognathae</taxon>
        <taxon>Galloanserae</taxon>
        <taxon>Galliformes</taxon>
        <taxon>Phasianidae</taxon>
        <taxon>Phasianinae</taxon>
        <taxon>Gallus</taxon>
    </lineage>
</organism>
<comment type="function">
    <text evidence="2">Neurofilaments usually contain three intermediate filament proteins: NEFL, NEFM, and NEFH which are involved in the maintenance of neuronal caliber. May additionally cooperate with other neuronal intermediate filament proteins to form neuronal filamentous networks (By similarity).</text>
</comment>
<comment type="subcellular location">
    <subcellularLocation>
        <location evidence="2">Cytoplasm</location>
        <location evidence="2">Cytoskeleton</location>
    </subcellularLocation>
    <subcellularLocation>
        <location evidence="2">Cell projection</location>
        <location evidence="2">Axon</location>
    </subcellularLocation>
</comment>
<comment type="PTM">
    <text>There are a number of repeats of the tripeptide K-S-P, NFM is phosphorylated on a number of the serines in this motif. It is thought that phosphorylation of NFM results in the formation of interfilament cross bridges that are important in the maintenance of axonal caliber.</text>
</comment>
<comment type="PTM">
    <text>Phosphorylation seems to play a major role in the functioning of the larger neurofilament polypeptides (NF-M and NF-H), the levels of phosphorylation being altered developmentally and coincident with a change in the neurofilament function.</text>
</comment>
<comment type="similarity">
    <text evidence="3">Belongs to the intermediate filament family.</text>
</comment>
<name>NFM_CHICK</name>